<organismHost>
    <name type="scientific">Homo sapiens</name>
    <name type="common">Human</name>
    <dbReference type="NCBI Taxonomy" id="9606"/>
</organismHost>
<feature type="signal peptide" evidence="4">
    <location>
        <begin position="1"/>
        <end position="25"/>
    </location>
</feature>
<feature type="chain" id="PRO_0000038217" description="Envelope glycoprotein D">
    <location>
        <begin position="26"/>
        <end position="393"/>
    </location>
</feature>
<feature type="topological domain" description="Virion surface" evidence="4">
    <location>
        <begin position="26"/>
        <end position="339"/>
    </location>
</feature>
<feature type="transmembrane region" description="Helical" evidence="4">
    <location>
        <begin position="340"/>
        <end position="363"/>
    </location>
</feature>
<feature type="topological domain" description="Intravirion" evidence="4">
    <location>
        <begin position="364"/>
        <end position="393"/>
    </location>
</feature>
<feature type="region of interest" description="Interaction with TNFRSF14" evidence="1">
    <location>
        <begin position="25"/>
        <end position="57"/>
    </location>
</feature>
<feature type="region of interest" description="Profusion" evidence="2">
    <location>
        <begin position="261"/>
        <end position="305"/>
    </location>
</feature>
<feature type="region of interest" description="Disordered" evidence="5">
    <location>
        <begin position="274"/>
        <end position="301"/>
    </location>
</feature>
<feature type="compositionally biased region" description="Polar residues" evidence="5">
    <location>
        <begin position="274"/>
        <end position="290"/>
    </location>
</feature>
<feature type="binding site" evidence="1">
    <location>
        <position position="64"/>
    </location>
    <ligand>
        <name>Zn(2+)</name>
        <dbReference type="ChEBI" id="CHEBI:29105"/>
        <note>ligand shared between dimeric partners</note>
    </ligand>
</feature>
<feature type="binding site" evidence="1">
    <location>
        <position position="240"/>
    </location>
    <ligand>
        <name>Zn(2+)</name>
        <dbReference type="ChEBI" id="CHEBI:29105"/>
        <note>ligand shared between dimeric partners</note>
    </ligand>
</feature>
<feature type="glycosylation site" description="N-linked (GlcNAc...) asparagine; by host" evidence="4">
    <location>
        <position position="119"/>
    </location>
</feature>
<feature type="glycosylation site" description="N-linked (GlcNAc...) asparagine; by host" evidence="8 11">
    <location>
        <position position="146"/>
    </location>
</feature>
<feature type="glycosylation site" description="N-linked (GlcNAc...) asparagine; by host" evidence="4">
    <location>
        <position position="287"/>
    </location>
</feature>
<feature type="disulfide bond" evidence="7 8 11">
    <location>
        <begin position="91"/>
        <end position="214"/>
    </location>
</feature>
<feature type="disulfide bond" evidence="7 8 10 11">
    <location>
        <begin position="131"/>
        <end position="227"/>
    </location>
</feature>
<feature type="disulfide bond" evidence="7 8 10 11">
    <location>
        <begin position="143"/>
        <end position="152"/>
    </location>
</feature>
<feature type="sequence variant" description="In strain: Isolate Lasky, Isolate BBKC, Isolate CAM4B, Isolate WTW1A and Isolate MMA.">
    <original>R</original>
    <variation>Q</variation>
    <location>
        <position position="52"/>
    </location>
</feature>
<feature type="sequence variant" description="In strain: Isolate Lasky.">
    <original>I</original>
    <variation>T</variation>
    <location>
        <position position="249"/>
    </location>
</feature>
<feature type="sequence variant" description="In strain: Isolate Lasky.">
    <original>S</original>
    <variation>A</variation>
    <location>
        <position position="337"/>
    </location>
</feature>
<feature type="sequence variant" description="In strain: Isolate Lasky, Isolate BBKC, Isolate CAM4B, Isolate WTW1A and Isolate MMA.">
    <original>V</original>
    <variation>A</variation>
    <location>
        <position position="353"/>
    </location>
</feature>
<feature type="sequence variant" description="In strain: Isolate Lasky.">
    <original>AQM</original>
    <variation>RSV</variation>
    <location>
        <begin position="367"/>
        <end position="369"/>
    </location>
</feature>
<feature type="strand" evidence="13">
    <location>
        <begin position="60"/>
        <end position="63"/>
    </location>
</feature>
<feature type="strand" evidence="12">
    <location>
        <begin position="65"/>
        <end position="68"/>
    </location>
</feature>
<feature type="strand" evidence="12">
    <location>
        <begin position="81"/>
        <end position="86"/>
    </location>
</feature>
<feature type="strand" evidence="12">
    <location>
        <begin position="89"/>
        <end position="92"/>
    </location>
</feature>
<feature type="strand" evidence="12">
    <location>
        <begin position="94"/>
        <end position="96"/>
    </location>
</feature>
<feature type="helix" evidence="12">
    <location>
        <begin position="102"/>
        <end position="105"/>
    </location>
</feature>
<feature type="strand" evidence="12">
    <location>
        <begin position="110"/>
        <end position="127"/>
    </location>
</feature>
<feature type="strand" evidence="12">
    <location>
        <begin position="132"/>
        <end position="147"/>
    </location>
</feature>
<feature type="strand" evidence="12">
    <location>
        <begin position="153"/>
        <end position="155"/>
    </location>
</feature>
<feature type="turn" evidence="13">
    <location>
        <begin position="164"/>
        <end position="166"/>
    </location>
</feature>
<feature type="strand" evidence="13">
    <location>
        <begin position="167"/>
        <end position="169"/>
    </location>
</feature>
<feature type="strand" evidence="12">
    <location>
        <begin position="176"/>
        <end position="178"/>
    </location>
</feature>
<feature type="helix" evidence="12">
    <location>
        <begin position="183"/>
        <end position="185"/>
    </location>
</feature>
<feature type="strand" evidence="12">
    <location>
        <begin position="187"/>
        <end position="195"/>
    </location>
</feature>
<feature type="strand" evidence="12">
    <location>
        <begin position="198"/>
        <end position="207"/>
    </location>
</feature>
<feature type="helix" evidence="12">
    <location>
        <begin position="224"/>
        <end position="226"/>
    </location>
</feature>
<feature type="helix" evidence="12">
    <location>
        <begin position="230"/>
        <end position="235"/>
    </location>
</feature>
<feature type="turn" evidence="12">
    <location>
        <begin position="239"/>
        <end position="243"/>
    </location>
</feature>
<feature type="helix" evidence="13">
    <location>
        <begin position="250"/>
        <end position="262"/>
    </location>
</feature>
<feature type="turn" evidence="13">
    <location>
        <begin position="263"/>
        <end position="265"/>
    </location>
</feature>
<feature type="strand" evidence="13">
    <location>
        <begin position="275"/>
        <end position="277"/>
    </location>
</feature>
<evidence type="ECO:0000250" key="1">
    <source>
        <dbReference type="UniProtKB" id="P57083"/>
    </source>
</evidence>
<evidence type="ECO:0000250" key="2">
    <source>
        <dbReference type="UniProtKB" id="Q05059"/>
    </source>
</evidence>
<evidence type="ECO:0000250" key="3">
    <source>
        <dbReference type="UniProtKB" id="Q69091"/>
    </source>
</evidence>
<evidence type="ECO:0000255" key="4"/>
<evidence type="ECO:0000256" key="5">
    <source>
        <dbReference type="SAM" id="MobiDB-lite"/>
    </source>
</evidence>
<evidence type="ECO:0000269" key="6">
    <source>
    </source>
</evidence>
<evidence type="ECO:0000269" key="7">
    <source>
    </source>
</evidence>
<evidence type="ECO:0000269" key="8">
    <source>
    </source>
</evidence>
<evidence type="ECO:0000305" key="9"/>
<evidence type="ECO:0007744" key="10">
    <source>
        <dbReference type="PDB" id="4MYV"/>
    </source>
</evidence>
<evidence type="ECO:0007744" key="11">
    <source>
        <dbReference type="PDB" id="4MYW"/>
    </source>
</evidence>
<evidence type="ECO:0007829" key="12">
    <source>
        <dbReference type="PDB" id="4MYV"/>
    </source>
</evidence>
<evidence type="ECO:0007829" key="13">
    <source>
        <dbReference type="PDB" id="4MYW"/>
    </source>
</evidence>
<accession>P03172</accession>
<accession>A7U8A6</accession>
<protein>
    <recommendedName>
        <fullName>Envelope glycoprotein D</fullName>
        <shortName>gD</shortName>
    </recommendedName>
</protein>
<reference key="1">
    <citation type="journal article" date="1984" name="DNA">
        <title>DNA sequence analysis of the type-common glycoprotein-D genes of herpes simplex virus types 1 and 2.</title>
        <authorList>
            <person name="Lasky L.A."/>
            <person name="Dowbenko D.J."/>
        </authorList>
    </citation>
    <scope>NUCLEOTIDE SEQUENCE [GENOMIC DNA]</scope>
    <source>
        <strain>Isolate Lasky</strain>
    </source>
</reference>
<reference key="2">
    <citation type="journal article" date="1983" name="Gene">
        <title>DNA sequence of the Herpes simplex virus type 2 glycoprotein D gene.</title>
        <authorList>
            <person name="Watson R.J."/>
        </authorList>
    </citation>
    <scope>NUCLEOTIDE SEQUENCE [GENOMIC DNA]</scope>
</reference>
<reference key="3">
    <citation type="journal article" date="1998" name="J. Infect. Dis.">
        <title>Limited variability of glycoprotein gene sequences and neutralizing targets in herpes simplex virus type 2 isolates and stability on passage in cell culture.</title>
        <authorList>
            <person name="Terhune S.S."/>
            <person name="Coleman K.T."/>
            <person name="Sekulovich R."/>
            <person name="Burke R.L."/>
            <person name="Spear P.G."/>
        </authorList>
    </citation>
    <scope>NUCLEOTIDE SEQUENCE [GENOMIC DNA]</scope>
    <source>
        <strain>Isolate BBKC</strain>
        <strain>Isolate CAMB4</strain>
        <strain>Isolate MMA</strain>
        <strain>Isolate WTW1A</strain>
    </source>
</reference>
<reference key="4">
    <citation type="journal article" date="2007" name="J. Virol.">
        <title>Herpes simplex virus type 2 glycoprotein G is targeted by the sulfated oligo- and polysaccharide inhibitors of virus attachment to cells.</title>
        <authorList>
            <person name="Adamiak B."/>
            <person name="Ekblad M."/>
            <person name="Bergstrom T."/>
            <person name="Ferro V."/>
            <person name="Trybala E."/>
        </authorList>
    </citation>
    <scope>NUCLEOTIDE SEQUENCE [GENOMIC DNA]</scope>
</reference>
<reference key="5">
    <citation type="journal article" date="1992" name="J. Virol.">
        <title>Disulfide bond structure of glycoprotein D of herpes simplex virus types 1 and 2.</title>
        <authorList>
            <person name="Long D."/>
            <person name="Wilcox W.C."/>
            <person name="Abrams W.R."/>
            <person name="Cohen G.H."/>
            <person name="Eisenberg R.J."/>
        </authorList>
    </citation>
    <scope>PROTEIN SEQUENCE OF 139-152 AND 245-259</scope>
    <scope>DISULFIDE BONDS</scope>
</reference>
<reference key="6">
    <citation type="journal article" date="1998" name="J. Virol.">
        <title>Herpes simplex virus glycoprotein D can bind to poliovirus receptor-related protein 1 or herpesvirus entry mediator, two structurally unrelated mediators of virus entry.</title>
        <authorList>
            <person name="Krummenacher C."/>
            <person name="Nicola A.V."/>
            <person name="Whitbeck J.C."/>
            <person name="Lou H."/>
            <person name="Hou W."/>
            <person name="Lambris J.D."/>
            <person name="Geraghty R.J."/>
            <person name="Spear P.G."/>
            <person name="Cohen G.H."/>
            <person name="Eisenberg R.J."/>
        </authorList>
    </citation>
    <scope>INTERACTION WITH HUMAN RECEPTORS TNFRSF14 AND NECTIN1</scope>
</reference>
<reference key="7">
    <citation type="journal article" date="2001" name="J. Virol.">
        <title>Structural features of nectin-2 (HveB) required for herpes simplex virus entry.</title>
        <authorList>
            <person name="Martinez W.M."/>
            <person name="Spear P.G."/>
        </authorList>
    </citation>
    <scope>INTERACTION WITH HUMAN RECEPTOR NECTIN2</scope>
    <scope>FUNCTION</scope>
</reference>
<reference evidence="10 11" key="8">
    <citation type="journal article" date="2014" name="J. Virol.">
        <title>Crystal structure of herpes simplex virus 2 gD bound to nectin-1 reveals a conserved mode of receptor recognition.</title>
        <authorList>
            <person name="Lu G."/>
            <person name="Zhang N."/>
            <person name="Qi J."/>
            <person name="Li Y."/>
            <person name="Chen Z."/>
            <person name="Zheng C."/>
            <person name="Gao G.F."/>
            <person name="Yan J."/>
        </authorList>
    </citation>
    <scope>X-RAY CRYSTALLOGRAPHY (1.80 ANGSTROMS) OF 26-310 IN COMPLEX WITH HOST NECTIN1</scope>
    <scope>FUNCTION</scope>
    <scope>GLYCOSYLATION AT ASN-146</scope>
    <scope>DISULFIDE BONDS</scope>
</reference>
<organism>
    <name type="scientific">Human herpesvirus 2 (strain 333)</name>
    <name type="common">HHV-2</name>
    <name type="synonym">Human herpes simplex virus 2</name>
    <dbReference type="NCBI Taxonomy" id="10313"/>
    <lineage>
        <taxon>Viruses</taxon>
        <taxon>Duplodnaviria</taxon>
        <taxon>Heunggongvirae</taxon>
        <taxon>Peploviricota</taxon>
        <taxon>Herviviricetes</taxon>
        <taxon>Herpesvirales</taxon>
        <taxon>Orthoherpesviridae</taxon>
        <taxon>Alphaherpesvirinae</taxon>
        <taxon>Simplexvirus</taxon>
        <taxon>Simplexvirus humanalpha2</taxon>
        <taxon>Human herpesvirus 2</taxon>
    </lineage>
</organism>
<dbReference type="EMBL" id="K02373">
    <property type="protein sequence ID" value="AAA45842.1"/>
    <property type="molecule type" value="Genomic_DNA"/>
</dbReference>
<dbReference type="EMBL" id="K01408">
    <property type="protein sequence ID" value="AAA45841.1"/>
    <property type="molecule type" value="Genomic_DNA"/>
</dbReference>
<dbReference type="EMBL" id="U12180">
    <property type="protein sequence ID" value="AAB60552.1"/>
    <property type="molecule type" value="Genomic_DNA"/>
</dbReference>
<dbReference type="EMBL" id="U12182">
    <property type="protein sequence ID" value="AAB60554.1"/>
    <property type="molecule type" value="Genomic_DNA"/>
</dbReference>
<dbReference type="EMBL" id="U12183">
    <property type="protein sequence ID" value="AAB60555.1"/>
    <property type="molecule type" value="Genomic_DNA"/>
</dbReference>
<dbReference type="EMBL" id="AF021342">
    <property type="protein sequence ID" value="AAB72102.1"/>
    <property type="molecule type" value="Genomic_DNA"/>
</dbReference>
<dbReference type="EMBL" id="EU018124">
    <property type="protein sequence ID" value="ABU45461.1"/>
    <property type="molecule type" value="Genomic_DNA"/>
</dbReference>
<dbReference type="EMBL" id="EU018125">
    <property type="protein sequence ID" value="ABU45462.1"/>
    <property type="molecule type" value="Genomic_DNA"/>
</dbReference>
<dbReference type="PIR" id="A03731">
    <property type="entry name" value="VGBED2"/>
</dbReference>
<dbReference type="PIR" id="A03732">
    <property type="entry name" value="VGBE33"/>
</dbReference>
<dbReference type="PDB" id="4MYV">
    <property type="method" value="X-ray"/>
    <property type="resolution" value="1.80 A"/>
    <property type="chains" value="A/B=26-310"/>
</dbReference>
<dbReference type="PDB" id="4MYW">
    <property type="method" value="X-ray"/>
    <property type="resolution" value="3.19 A"/>
    <property type="chains" value="A/C=26-310"/>
</dbReference>
<dbReference type="PDBsum" id="4MYV"/>
<dbReference type="PDBsum" id="4MYW"/>
<dbReference type="SMR" id="P03172"/>
<dbReference type="GlyCosmos" id="P03172">
    <property type="glycosylation" value="3 sites, No reported glycans"/>
</dbReference>
<dbReference type="ABCD" id="P03172">
    <property type="antibodies" value="1 sequenced antibody"/>
</dbReference>
<dbReference type="EvolutionaryTrace" id="P03172"/>
<dbReference type="GO" id="GO:0016020">
    <property type="term" value="C:membrane"/>
    <property type="evidence" value="ECO:0007669"/>
    <property type="project" value="UniProtKB-KW"/>
</dbReference>
<dbReference type="GO" id="GO:0019031">
    <property type="term" value="C:viral envelope"/>
    <property type="evidence" value="ECO:0007669"/>
    <property type="project" value="UniProtKB-KW"/>
</dbReference>
<dbReference type="GO" id="GO:0055036">
    <property type="term" value="C:virion membrane"/>
    <property type="evidence" value="ECO:0000250"/>
    <property type="project" value="UniProt"/>
</dbReference>
<dbReference type="GO" id="GO:0046872">
    <property type="term" value="F:metal ion binding"/>
    <property type="evidence" value="ECO:0007669"/>
    <property type="project" value="UniProtKB-KW"/>
</dbReference>
<dbReference type="GO" id="GO:0048018">
    <property type="term" value="F:receptor ligand activity"/>
    <property type="evidence" value="ECO:0000314"/>
    <property type="project" value="UniProtKB"/>
</dbReference>
<dbReference type="GO" id="GO:0046814">
    <property type="term" value="P:coreceptor-mediated virion attachment to host cell"/>
    <property type="evidence" value="ECO:0000315"/>
    <property type="project" value="BHF-UCL"/>
</dbReference>
<dbReference type="GO" id="GO:0098670">
    <property type="term" value="P:entry receptor-mediated virion attachment to host cell"/>
    <property type="evidence" value="ECO:0007669"/>
    <property type="project" value="UniProtKB-KW"/>
</dbReference>
<dbReference type="GO" id="GO:0019064">
    <property type="term" value="P:fusion of virus membrane with host plasma membrane"/>
    <property type="evidence" value="ECO:0000314"/>
    <property type="project" value="BHF-UCL"/>
</dbReference>
<dbReference type="GO" id="GO:0046718">
    <property type="term" value="P:symbiont entry into host cell"/>
    <property type="evidence" value="ECO:0000314"/>
    <property type="project" value="UniProtKB"/>
</dbReference>
<dbReference type="CDD" id="cd12087">
    <property type="entry name" value="TM_EGFR-like"/>
    <property type="match status" value="1"/>
</dbReference>
<dbReference type="Gene3D" id="2.70.230.10">
    <property type="match status" value="1"/>
</dbReference>
<dbReference type="InterPro" id="IPR002896">
    <property type="entry name" value="Herpes_glycop_dom"/>
</dbReference>
<dbReference type="InterPro" id="IPR036179">
    <property type="entry name" value="Ig-like_dom_sf"/>
</dbReference>
<dbReference type="Pfam" id="PF01537">
    <property type="entry name" value="Herpes_glycop_D"/>
    <property type="match status" value="1"/>
</dbReference>
<dbReference type="SUPFAM" id="SSF48726">
    <property type="entry name" value="Immunoglobulin"/>
    <property type="match status" value="1"/>
</dbReference>
<proteinExistence type="evidence at protein level"/>
<comment type="function">
    <text evidence="2 6 8">Envelope glycoprotein that binds to the host cell entry receptors NECTIN1, NECTIN2 and TNFRSF14/HVEM, promoting the virus entry into host cells (PubMed:11602758, PubMed:25231300). May trigger fusion with host membrane, by recruiting the fusion machinery composed of gB and gH/gL (By similarity).</text>
</comment>
<comment type="subunit">
    <text evidence="2 3">Homodimer (By similarity). Interacts with host receptor TNFRSF14. Interacts with host receptor NECTIN1. Interacts with host receptor NECTIN2. Interacts (via profusion domain) with gB; this interaction occurs in the absence of gH/gL. Interacts (via profusion domain) with gH/gL heterodimer; this interaction occurs in the absence of gB. Associates with the gB-gH/gL-gD complex. Interacts (via C-terminus) with UL11 tegument protein (By similarity).</text>
</comment>
<comment type="subcellular location">
    <subcellularLocation>
        <location evidence="2">Virion membrane</location>
        <topology evidence="2">Single-pass type I membrane protein</topology>
    </subcellularLocation>
    <text evidence="3">During virion morphogenesis, this protein probably accumulates in the endosomes and trans-Golgi where secondary envelopment occurs.</text>
</comment>
<comment type="similarity">
    <text evidence="9">Belongs to the herpesviridae glycoprotein D family.</text>
</comment>
<name>GD_HHV23</name>
<sequence>MGRLTSGVGTAALLVVAVGLRVVCAKYALADPSLKMADPNRFRGKNLPVLDRLTDPPGVKRVYHIQPSLEDPFQPPSIPITVYYAVLERACRSVLLHAPSEAPQIVRGASDEARKHTYNLTIAWYRMGDNCAIPITVMEYTECPYNKSLGVCPIRTQPRWSYYDSFSAVSEDNLGFLMHAPAFETAGTYLRLVKINDWTEITQFILEHRARASCKYALPLRIPPAACLTSKAYQQGVTVDSIGMLPRFIPENQRTVALYSLKIAGWHGPKPPYTSTLLPPELSDTTNATQPELVPEDPEDSALLEDPAGTVSSQIPPNWHIPSIQDVAPHHAPAAPSNPGLIIGALAGSTLAVLVIGGIAFWVRRRAQMAPKRLRLPHIRDDDAPPSHQPLFY</sequence>
<gene>
    <name type="primary">gD</name>
    <name type="synonym">US6</name>
</gene>
<keyword id="KW-0002">3D-structure</keyword>
<keyword id="KW-0903">Direct protein sequencing</keyword>
<keyword id="KW-1015">Disulfide bond</keyword>
<keyword id="KW-0325">Glycoprotein</keyword>
<keyword id="KW-0945">Host-virus interaction</keyword>
<keyword id="KW-0472">Membrane</keyword>
<keyword id="KW-0479">Metal-binding</keyword>
<keyword id="KW-0732">Signal</keyword>
<keyword id="KW-0812">Transmembrane</keyword>
<keyword id="KW-1133">Transmembrane helix</keyword>
<keyword id="KW-1161">Viral attachment to host cell</keyword>
<keyword id="KW-1234">Viral attachment to host entry receptor</keyword>
<keyword id="KW-0261">Viral envelope protein</keyword>
<keyword id="KW-0946">Virion</keyword>
<keyword id="KW-1160">Virus entry into host cell</keyword>
<keyword id="KW-0862">Zinc</keyword>